<keyword id="KW-0066">ATP synthesis</keyword>
<keyword id="KW-0997">Cell inner membrane</keyword>
<keyword id="KW-1003">Cell membrane</keyword>
<keyword id="KW-0138">CF(0)</keyword>
<keyword id="KW-0375">Hydrogen ion transport</keyword>
<keyword id="KW-0406">Ion transport</keyword>
<keyword id="KW-0472">Membrane</keyword>
<keyword id="KW-0812">Transmembrane</keyword>
<keyword id="KW-1133">Transmembrane helix</keyword>
<keyword id="KW-0813">Transport</keyword>
<accession>B6J2D4</accession>
<comment type="function">
    <text evidence="1">Key component of the proton channel; it plays a direct role in the translocation of protons across the membrane.</text>
</comment>
<comment type="subunit">
    <text evidence="1">F-type ATPases have 2 components, CF(1) - the catalytic core - and CF(0) - the membrane proton channel. CF(1) has five subunits: alpha(3), beta(3), gamma(1), delta(1), epsilon(1). CF(0) has three main subunits: a(1), b(2) and c(9-12). The alpha and beta chains form an alternating ring which encloses part of the gamma chain. CF(1) is attached to CF(0) by a central stalk formed by the gamma and epsilon chains, while a peripheral stalk is formed by the delta and b chains.</text>
</comment>
<comment type="subcellular location">
    <subcellularLocation>
        <location evidence="1">Cell inner membrane</location>
        <topology evidence="1">Multi-pass membrane protein</topology>
    </subcellularLocation>
</comment>
<comment type="similarity">
    <text evidence="1">Belongs to the ATPase A chain family.</text>
</comment>
<evidence type="ECO:0000255" key="1">
    <source>
        <dbReference type="HAMAP-Rule" id="MF_01393"/>
    </source>
</evidence>
<dbReference type="EMBL" id="CP001019">
    <property type="protein sequence ID" value="ACJ17508.1"/>
    <property type="molecule type" value="Genomic_DNA"/>
</dbReference>
<dbReference type="RefSeq" id="WP_012569561.1">
    <property type="nucleotide sequence ID" value="NC_011527.1"/>
</dbReference>
<dbReference type="SMR" id="B6J2D4"/>
<dbReference type="KEGG" id="cbg:CbuG_0050"/>
<dbReference type="HOGENOM" id="CLU_041018_1_0_6"/>
<dbReference type="GO" id="GO:0005886">
    <property type="term" value="C:plasma membrane"/>
    <property type="evidence" value="ECO:0007669"/>
    <property type="project" value="UniProtKB-SubCell"/>
</dbReference>
<dbReference type="GO" id="GO:0045259">
    <property type="term" value="C:proton-transporting ATP synthase complex"/>
    <property type="evidence" value="ECO:0007669"/>
    <property type="project" value="UniProtKB-KW"/>
</dbReference>
<dbReference type="GO" id="GO:0046933">
    <property type="term" value="F:proton-transporting ATP synthase activity, rotational mechanism"/>
    <property type="evidence" value="ECO:0007669"/>
    <property type="project" value="UniProtKB-UniRule"/>
</dbReference>
<dbReference type="GO" id="GO:0042777">
    <property type="term" value="P:proton motive force-driven plasma membrane ATP synthesis"/>
    <property type="evidence" value="ECO:0007669"/>
    <property type="project" value="TreeGrafter"/>
</dbReference>
<dbReference type="CDD" id="cd00310">
    <property type="entry name" value="ATP-synt_Fo_a_6"/>
    <property type="match status" value="1"/>
</dbReference>
<dbReference type="FunFam" id="1.20.120.220:FF:000002">
    <property type="entry name" value="ATP synthase subunit a"/>
    <property type="match status" value="1"/>
</dbReference>
<dbReference type="Gene3D" id="1.20.120.220">
    <property type="entry name" value="ATP synthase, F0 complex, subunit A"/>
    <property type="match status" value="1"/>
</dbReference>
<dbReference type="HAMAP" id="MF_01393">
    <property type="entry name" value="ATP_synth_a_bact"/>
    <property type="match status" value="1"/>
</dbReference>
<dbReference type="InterPro" id="IPR045082">
    <property type="entry name" value="ATP_syn_F0_a_bact/chloroplast"/>
</dbReference>
<dbReference type="InterPro" id="IPR000568">
    <property type="entry name" value="ATP_synth_F0_asu"/>
</dbReference>
<dbReference type="InterPro" id="IPR023011">
    <property type="entry name" value="ATP_synth_F0_asu_AS"/>
</dbReference>
<dbReference type="InterPro" id="IPR035908">
    <property type="entry name" value="F0_ATP_A_sf"/>
</dbReference>
<dbReference type="NCBIfam" id="TIGR01131">
    <property type="entry name" value="ATP_synt_6_or_A"/>
    <property type="match status" value="1"/>
</dbReference>
<dbReference type="NCBIfam" id="NF004477">
    <property type="entry name" value="PRK05815.1-1"/>
    <property type="match status" value="1"/>
</dbReference>
<dbReference type="PANTHER" id="PTHR42823">
    <property type="entry name" value="ATP SYNTHASE SUBUNIT A, CHLOROPLASTIC"/>
    <property type="match status" value="1"/>
</dbReference>
<dbReference type="PANTHER" id="PTHR42823:SF3">
    <property type="entry name" value="ATP SYNTHASE SUBUNIT A, CHLOROPLASTIC"/>
    <property type="match status" value="1"/>
</dbReference>
<dbReference type="Pfam" id="PF00119">
    <property type="entry name" value="ATP-synt_A"/>
    <property type="match status" value="1"/>
</dbReference>
<dbReference type="PRINTS" id="PR00123">
    <property type="entry name" value="ATPASEA"/>
</dbReference>
<dbReference type="SUPFAM" id="SSF81336">
    <property type="entry name" value="F1F0 ATP synthase subunit A"/>
    <property type="match status" value="1"/>
</dbReference>
<dbReference type="PROSITE" id="PS00449">
    <property type="entry name" value="ATPASE_A"/>
    <property type="match status" value="1"/>
</dbReference>
<proteinExistence type="inferred from homology"/>
<reference key="1">
    <citation type="journal article" date="2009" name="Infect. Immun.">
        <title>Comparative genomics reveal extensive transposon-mediated genomic plasticity and diversity among potential effector proteins within the genus Coxiella.</title>
        <authorList>
            <person name="Beare P.A."/>
            <person name="Unsworth N."/>
            <person name="Andoh M."/>
            <person name="Voth D.E."/>
            <person name="Omsland A."/>
            <person name="Gilk S.D."/>
            <person name="Williams K.P."/>
            <person name="Sobral B.W."/>
            <person name="Kupko J.J. III"/>
            <person name="Porcella S.F."/>
            <person name="Samuel J.E."/>
            <person name="Heinzen R.A."/>
        </authorList>
    </citation>
    <scope>NUCLEOTIDE SEQUENCE [LARGE SCALE GENOMIC DNA]</scope>
    <source>
        <strain>CbuG_Q212</strain>
    </source>
</reference>
<organism>
    <name type="scientific">Coxiella burnetii (strain CbuG_Q212)</name>
    <name type="common">Coxiella burnetii (strain Q212)</name>
    <dbReference type="NCBI Taxonomy" id="434923"/>
    <lineage>
        <taxon>Bacteria</taxon>
        <taxon>Pseudomonadati</taxon>
        <taxon>Pseudomonadota</taxon>
        <taxon>Gammaproteobacteria</taxon>
        <taxon>Legionellales</taxon>
        <taxon>Coxiellaceae</taxon>
        <taxon>Coxiella</taxon>
    </lineage>
</organism>
<sequence>MYAQPKLTSAEYVQHHMSHWKLNLHNFTFTDGGFWTLNLDTLIISVVLGALFILIFYIIARRATASVPGKWQNAIEMAVEAVDGTVKDSFHGDRSLVAPLALTIFIWVFLMNFMDLVPVDLIPRLFQMGGVEHFKAVPTADPTLTFAMSITVFVLVVFYNFKMKGAIGLGKEVLSRPFGWYLMPINVIFRLIDEGVKPISLALRLFGNLFAGELIFILIALLPWWSQFTLGMVWTLFHLLVITVQAFIFMMLTVVYISLAAESH</sequence>
<name>ATP6_COXB2</name>
<feature type="chain" id="PRO_1000145267" description="ATP synthase subunit a">
    <location>
        <begin position="1"/>
        <end position="264"/>
    </location>
</feature>
<feature type="transmembrane region" description="Helical" evidence="1">
    <location>
        <begin position="39"/>
        <end position="59"/>
    </location>
</feature>
<feature type="transmembrane region" description="Helical" evidence="1">
    <location>
        <begin position="97"/>
        <end position="117"/>
    </location>
</feature>
<feature type="transmembrane region" description="Helical" evidence="1">
    <location>
        <begin position="139"/>
        <end position="159"/>
    </location>
</feature>
<feature type="transmembrane region" description="Helical" evidence="1">
    <location>
        <begin position="205"/>
        <end position="225"/>
    </location>
</feature>
<feature type="transmembrane region" description="Helical" evidence="1">
    <location>
        <begin position="239"/>
        <end position="259"/>
    </location>
</feature>
<gene>
    <name evidence="1" type="primary">atpB</name>
    <name type="ordered locus">CbuG_0050</name>
</gene>
<protein>
    <recommendedName>
        <fullName evidence="1">ATP synthase subunit a</fullName>
    </recommendedName>
    <alternativeName>
        <fullName evidence="1">ATP synthase F0 sector subunit a</fullName>
    </alternativeName>
    <alternativeName>
        <fullName evidence="1">F-ATPase subunit 6</fullName>
    </alternativeName>
</protein>